<gene>
    <name evidence="1" type="primary">rex</name>
    <name type="ordered locus">CLI_3476</name>
</gene>
<accession>A7GIP1</accession>
<dbReference type="EMBL" id="CP000728">
    <property type="protein sequence ID" value="ABS40548.1"/>
    <property type="molecule type" value="Genomic_DNA"/>
</dbReference>
<dbReference type="RefSeq" id="WP_003357537.1">
    <property type="nucleotide sequence ID" value="NC_009699.1"/>
</dbReference>
<dbReference type="SMR" id="A7GIP1"/>
<dbReference type="KEGG" id="cbf:CLI_3476"/>
<dbReference type="HOGENOM" id="CLU_061534_1_0_9"/>
<dbReference type="Proteomes" id="UP000002410">
    <property type="component" value="Chromosome"/>
</dbReference>
<dbReference type="GO" id="GO:0005737">
    <property type="term" value="C:cytoplasm"/>
    <property type="evidence" value="ECO:0007669"/>
    <property type="project" value="UniProtKB-SubCell"/>
</dbReference>
<dbReference type="GO" id="GO:0003677">
    <property type="term" value="F:DNA binding"/>
    <property type="evidence" value="ECO:0007669"/>
    <property type="project" value="UniProtKB-UniRule"/>
</dbReference>
<dbReference type="GO" id="GO:0003700">
    <property type="term" value="F:DNA-binding transcription factor activity"/>
    <property type="evidence" value="ECO:0007669"/>
    <property type="project" value="UniProtKB-UniRule"/>
</dbReference>
<dbReference type="GO" id="GO:0045892">
    <property type="term" value="P:negative regulation of DNA-templated transcription"/>
    <property type="evidence" value="ECO:0007669"/>
    <property type="project" value="InterPro"/>
</dbReference>
<dbReference type="GO" id="GO:0051775">
    <property type="term" value="P:response to redox state"/>
    <property type="evidence" value="ECO:0007669"/>
    <property type="project" value="InterPro"/>
</dbReference>
<dbReference type="Gene3D" id="3.40.50.720">
    <property type="entry name" value="NAD(P)-binding Rossmann-like Domain"/>
    <property type="match status" value="1"/>
</dbReference>
<dbReference type="Gene3D" id="1.10.10.10">
    <property type="entry name" value="Winged helix-like DNA-binding domain superfamily/Winged helix DNA-binding domain"/>
    <property type="match status" value="1"/>
</dbReference>
<dbReference type="HAMAP" id="MF_01131">
    <property type="entry name" value="Rex"/>
    <property type="match status" value="1"/>
</dbReference>
<dbReference type="InterPro" id="IPR003781">
    <property type="entry name" value="CoA-bd"/>
</dbReference>
<dbReference type="InterPro" id="IPR036291">
    <property type="entry name" value="NAD(P)-bd_dom_sf"/>
</dbReference>
<dbReference type="InterPro" id="IPR009718">
    <property type="entry name" value="Rex_DNA-bd_C_dom"/>
</dbReference>
<dbReference type="InterPro" id="IPR022876">
    <property type="entry name" value="Tscrpt_rep_Rex"/>
</dbReference>
<dbReference type="InterPro" id="IPR036388">
    <property type="entry name" value="WH-like_DNA-bd_sf"/>
</dbReference>
<dbReference type="InterPro" id="IPR036390">
    <property type="entry name" value="WH_DNA-bd_sf"/>
</dbReference>
<dbReference type="NCBIfam" id="NF003989">
    <property type="entry name" value="PRK05472.1-3"/>
    <property type="match status" value="1"/>
</dbReference>
<dbReference type="NCBIfam" id="NF003990">
    <property type="entry name" value="PRK05472.1-4"/>
    <property type="match status" value="1"/>
</dbReference>
<dbReference type="NCBIfam" id="NF003993">
    <property type="entry name" value="PRK05472.2-2"/>
    <property type="match status" value="1"/>
</dbReference>
<dbReference type="NCBIfam" id="NF003994">
    <property type="entry name" value="PRK05472.2-3"/>
    <property type="match status" value="1"/>
</dbReference>
<dbReference type="NCBIfam" id="NF003995">
    <property type="entry name" value="PRK05472.2-4"/>
    <property type="match status" value="1"/>
</dbReference>
<dbReference type="NCBIfam" id="NF003996">
    <property type="entry name" value="PRK05472.2-5"/>
    <property type="match status" value="1"/>
</dbReference>
<dbReference type="PANTHER" id="PTHR35786">
    <property type="entry name" value="REDOX-SENSING TRANSCRIPTIONAL REPRESSOR REX"/>
    <property type="match status" value="1"/>
</dbReference>
<dbReference type="PANTHER" id="PTHR35786:SF1">
    <property type="entry name" value="REDOX-SENSING TRANSCRIPTIONAL REPRESSOR REX 1"/>
    <property type="match status" value="1"/>
</dbReference>
<dbReference type="Pfam" id="PF02629">
    <property type="entry name" value="CoA_binding"/>
    <property type="match status" value="1"/>
</dbReference>
<dbReference type="Pfam" id="PF06971">
    <property type="entry name" value="Put_DNA-bind_N"/>
    <property type="match status" value="1"/>
</dbReference>
<dbReference type="SMART" id="SM00881">
    <property type="entry name" value="CoA_binding"/>
    <property type="match status" value="1"/>
</dbReference>
<dbReference type="SUPFAM" id="SSF51735">
    <property type="entry name" value="NAD(P)-binding Rossmann-fold domains"/>
    <property type="match status" value="1"/>
</dbReference>
<dbReference type="SUPFAM" id="SSF46785">
    <property type="entry name" value="Winged helix' DNA-binding domain"/>
    <property type="match status" value="1"/>
</dbReference>
<comment type="function">
    <text evidence="1">Modulates transcription in response to changes in cellular NADH/NAD(+) redox state.</text>
</comment>
<comment type="subunit">
    <text evidence="1">Homodimer.</text>
</comment>
<comment type="subcellular location">
    <subcellularLocation>
        <location evidence="1">Cytoplasm</location>
    </subcellularLocation>
</comment>
<comment type="similarity">
    <text evidence="1">Belongs to the transcriptional regulatory Rex family.</text>
</comment>
<sequence length="210" mass="23754">MDKKKNISMAVIRRLPKYHRYLYELLKNDVDRISSKELSEKIGFTASQIRQDLNCFGDFGQQGYGYNVSELHHQISNILGLNNPYNIIIIGAGNIGQALANYTRFSKLGFNVKAMFDTNPKLIGLKIREIEILDIDYLSSYLEKNNIDIGIICVPHDNAQKVANILVKNDIKGIWNFAPIDLSVPEDVVVENVHLSDSLLTLTCLINKTE</sequence>
<keyword id="KW-0963">Cytoplasm</keyword>
<keyword id="KW-0238">DNA-binding</keyword>
<keyword id="KW-0520">NAD</keyword>
<keyword id="KW-0678">Repressor</keyword>
<keyword id="KW-0804">Transcription</keyword>
<keyword id="KW-0805">Transcription regulation</keyword>
<protein>
    <recommendedName>
        <fullName evidence="1">Redox-sensing transcriptional repressor Rex</fullName>
    </recommendedName>
</protein>
<name>REX_CLOBL</name>
<feature type="chain" id="PRO_1000065395" description="Redox-sensing transcriptional repressor Rex">
    <location>
        <begin position="1"/>
        <end position="210"/>
    </location>
</feature>
<feature type="DNA-binding region" description="H-T-H motif" evidence="1">
    <location>
        <begin position="17"/>
        <end position="56"/>
    </location>
</feature>
<feature type="binding site" evidence="1">
    <location>
        <begin position="91"/>
        <end position="96"/>
    </location>
    <ligand>
        <name>NAD(+)</name>
        <dbReference type="ChEBI" id="CHEBI:57540"/>
    </ligand>
</feature>
<organism>
    <name type="scientific">Clostridium botulinum (strain Langeland / NCTC 10281 / Type F)</name>
    <dbReference type="NCBI Taxonomy" id="441772"/>
    <lineage>
        <taxon>Bacteria</taxon>
        <taxon>Bacillati</taxon>
        <taxon>Bacillota</taxon>
        <taxon>Clostridia</taxon>
        <taxon>Eubacteriales</taxon>
        <taxon>Clostridiaceae</taxon>
        <taxon>Clostridium</taxon>
    </lineage>
</organism>
<proteinExistence type="inferred from homology"/>
<reference key="1">
    <citation type="submission" date="2007-06" db="EMBL/GenBank/DDBJ databases">
        <authorList>
            <person name="Brinkac L.M."/>
            <person name="Daugherty S."/>
            <person name="Dodson R.J."/>
            <person name="Madupu R."/>
            <person name="Brown J.L."/>
            <person name="Bruce D."/>
            <person name="Detter C."/>
            <person name="Munk C."/>
            <person name="Smith L.A."/>
            <person name="Smith T.J."/>
            <person name="White O."/>
            <person name="Brettin T.S."/>
        </authorList>
    </citation>
    <scope>NUCLEOTIDE SEQUENCE [LARGE SCALE GENOMIC DNA]</scope>
    <source>
        <strain>Langeland / NCTC 10281 / Type F</strain>
    </source>
</reference>
<evidence type="ECO:0000255" key="1">
    <source>
        <dbReference type="HAMAP-Rule" id="MF_01131"/>
    </source>
</evidence>